<evidence type="ECO:0000250" key="1"/>
<evidence type="ECO:0000255" key="2"/>
<evidence type="ECO:0000305" key="3"/>
<organism>
    <name type="scientific">Staphylococcus saprophyticus subsp. saprophyticus (strain ATCC 15305 / DSM 20229 / NCIMB 8711 / NCTC 7292 / S-41)</name>
    <dbReference type="NCBI Taxonomy" id="342451"/>
    <lineage>
        <taxon>Bacteria</taxon>
        <taxon>Bacillati</taxon>
        <taxon>Bacillota</taxon>
        <taxon>Bacilli</taxon>
        <taxon>Bacillales</taxon>
        <taxon>Staphylococcaceae</taxon>
        <taxon>Staphylococcus</taxon>
    </lineage>
</organism>
<sequence length="115" mass="12705">MEILMIFVCGILTAMSVYLILSKSLIRIIIGTTLQTHTANLFLITMGGLKKGEVPIYEKGITSYVDPIPQALILTAIVISFSVTAFFLVLAFRSYKELGTDNVESMKGVLEDDRE</sequence>
<gene>
    <name type="primary">mnhC1</name>
    <name type="ordered locus">SSP1825</name>
</gene>
<accession>Q49W89</accession>
<keyword id="KW-0050">Antiport</keyword>
<keyword id="KW-1003">Cell membrane</keyword>
<keyword id="KW-0375">Hydrogen ion transport</keyword>
<keyword id="KW-0406">Ion transport</keyword>
<keyword id="KW-0472">Membrane</keyword>
<keyword id="KW-1185">Reference proteome</keyword>
<keyword id="KW-0915">Sodium</keyword>
<keyword id="KW-0739">Sodium transport</keyword>
<keyword id="KW-0812">Transmembrane</keyword>
<keyword id="KW-1133">Transmembrane helix</keyword>
<keyword id="KW-0813">Transport</keyword>
<name>MNHC1_STAS1</name>
<dbReference type="EMBL" id="AP008934">
    <property type="protein sequence ID" value="BAE18970.1"/>
    <property type="molecule type" value="Genomic_DNA"/>
</dbReference>
<dbReference type="RefSeq" id="WP_002483802.1">
    <property type="nucleotide sequence ID" value="NZ_MTGA01000039.1"/>
</dbReference>
<dbReference type="SMR" id="Q49W89"/>
<dbReference type="GeneID" id="66867999"/>
<dbReference type="KEGG" id="ssp:SSP1825"/>
<dbReference type="eggNOG" id="COG1006">
    <property type="taxonomic scope" value="Bacteria"/>
</dbReference>
<dbReference type="HOGENOM" id="CLU_082058_3_1_9"/>
<dbReference type="OrthoDB" id="9799219at2"/>
<dbReference type="Proteomes" id="UP000006371">
    <property type="component" value="Chromosome"/>
</dbReference>
<dbReference type="GO" id="GO:0005886">
    <property type="term" value="C:plasma membrane"/>
    <property type="evidence" value="ECO:0007669"/>
    <property type="project" value="UniProtKB-SubCell"/>
</dbReference>
<dbReference type="GO" id="GO:0015297">
    <property type="term" value="F:antiporter activity"/>
    <property type="evidence" value="ECO:0007669"/>
    <property type="project" value="UniProtKB-KW"/>
</dbReference>
<dbReference type="GO" id="GO:1902600">
    <property type="term" value="P:proton transmembrane transport"/>
    <property type="evidence" value="ECO:0007669"/>
    <property type="project" value="UniProtKB-KW"/>
</dbReference>
<dbReference type="GO" id="GO:0006814">
    <property type="term" value="P:sodium ion transport"/>
    <property type="evidence" value="ECO:0007669"/>
    <property type="project" value="UniProtKB-KW"/>
</dbReference>
<dbReference type="Gene3D" id="1.10.287.3510">
    <property type="match status" value="1"/>
</dbReference>
<dbReference type="InterPro" id="IPR050601">
    <property type="entry name" value="CPA3_antiporter_subunitC"/>
</dbReference>
<dbReference type="InterPro" id="IPR039428">
    <property type="entry name" value="NUOK/Mnh_C1-like"/>
</dbReference>
<dbReference type="NCBIfam" id="NF006372">
    <property type="entry name" value="PRK08600.1"/>
    <property type="match status" value="1"/>
</dbReference>
<dbReference type="NCBIfam" id="NF006573">
    <property type="entry name" value="PRK09094.1"/>
    <property type="match status" value="1"/>
</dbReference>
<dbReference type="PANTHER" id="PTHR34583">
    <property type="entry name" value="ANTIPORTER SUBUNIT MNHC2-RELATED"/>
    <property type="match status" value="1"/>
</dbReference>
<dbReference type="PANTHER" id="PTHR34583:SF2">
    <property type="entry name" value="ANTIPORTER SUBUNIT MNHC2-RELATED"/>
    <property type="match status" value="1"/>
</dbReference>
<dbReference type="Pfam" id="PF00420">
    <property type="entry name" value="Oxidored_q2"/>
    <property type="match status" value="1"/>
</dbReference>
<comment type="function">
    <text evidence="1">Mnh complex is a Na(+)/H(+) antiporter involved in Na(+) excretion.</text>
</comment>
<comment type="subunit">
    <text evidence="1">May form a heterooligomeric complex that consists of seven subunits: mnhA1, mnhB1, mnhC1, mnhD1, mnhE1, mnhF1 and mnhG1.</text>
</comment>
<comment type="subcellular location">
    <subcellularLocation>
        <location evidence="3">Cell membrane</location>
        <topology evidence="3">Multi-pass membrane protein</topology>
    </subcellularLocation>
</comment>
<comment type="similarity">
    <text evidence="3">Belongs to the CPA3 antiporters (TC 2.A.63) subunit C family.</text>
</comment>
<proteinExistence type="inferred from homology"/>
<protein>
    <recommendedName>
        <fullName>Na(+)/H(+) antiporter subunit C1</fullName>
    </recommendedName>
    <alternativeName>
        <fullName>Mnh complex subunit C1</fullName>
    </alternativeName>
</protein>
<reference key="1">
    <citation type="journal article" date="2005" name="Proc. Natl. Acad. Sci. U.S.A.">
        <title>Whole genome sequence of Staphylococcus saprophyticus reveals the pathogenesis of uncomplicated urinary tract infection.</title>
        <authorList>
            <person name="Kuroda M."/>
            <person name="Yamashita A."/>
            <person name="Hirakawa H."/>
            <person name="Kumano M."/>
            <person name="Morikawa K."/>
            <person name="Higashide M."/>
            <person name="Maruyama A."/>
            <person name="Inose Y."/>
            <person name="Matoba K."/>
            <person name="Toh H."/>
            <person name="Kuhara S."/>
            <person name="Hattori M."/>
            <person name="Ohta T."/>
        </authorList>
    </citation>
    <scope>NUCLEOTIDE SEQUENCE [LARGE SCALE GENOMIC DNA]</scope>
    <source>
        <strain>ATCC 15305 / DSM 20229 / NCIMB 8711 / NCTC 7292 / S-41</strain>
    </source>
</reference>
<feature type="chain" id="PRO_0000372128" description="Na(+)/H(+) antiporter subunit C1">
    <location>
        <begin position="1"/>
        <end position="115"/>
    </location>
</feature>
<feature type="transmembrane region" description="Helical" evidence="2">
    <location>
        <begin position="1"/>
        <end position="21"/>
    </location>
</feature>
<feature type="transmembrane region" description="Helical" evidence="2">
    <location>
        <begin position="28"/>
        <end position="48"/>
    </location>
</feature>
<feature type="transmembrane region" description="Helical" evidence="2">
    <location>
        <begin position="72"/>
        <end position="92"/>
    </location>
</feature>